<proteinExistence type="inferred from homology"/>
<feature type="chain" id="PRO_0000094366" description="Elongation factor P">
    <location>
        <begin position="1"/>
        <end position="188"/>
    </location>
</feature>
<feature type="modified residue" description="N6-(3,6-diaminohexanoyl)-5-hydroxylysine" evidence="1">
    <location>
        <position position="34"/>
    </location>
</feature>
<accession>Q87KX9</accession>
<reference key="1">
    <citation type="journal article" date="2003" name="Lancet">
        <title>Genome sequence of Vibrio parahaemolyticus: a pathogenic mechanism distinct from that of V. cholerae.</title>
        <authorList>
            <person name="Makino K."/>
            <person name="Oshima K."/>
            <person name="Kurokawa K."/>
            <person name="Yokoyama K."/>
            <person name="Uda T."/>
            <person name="Tagomori K."/>
            <person name="Iijima Y."/>
            <person name="Najima M."/>
            <person name="Nakano M."/>
            <person name="Yamashita A."/>
            <person name="Kubota Y."/>
            <person name="Kimura S."/>
            <person name="Yasunaga T."/>
            <person name="Honda T."/>
            <person name="Shinagawa H."/>
            <person name="Hattori M."/>
            <person name="Iida T."/>
        </authorList>
    </citation>
    <scope>NUCLEOTIDE SEQUENCE [LARGE SCALE GENOMIC DNA]</scope>
    <source>
        <strain>RIMD 2210633</strain>
    </source>
</reference>
<evidence type="ECO:0000255" key="1">
    <source>
        <dbReference type="HAMAP-Rule" id="MF_00141"/>
    </source>
</evidence>
<sequence>MATVSTNEFKGGLKLMLDNEPCVILENEYVKPGKGQAFNRVKIRKLLSGKVLEKTFKSGDTCEVADVMDIDLDYLYSDGEFYHFMNNETFEQIAADAKAVGENAKWLVENNTCMITLWNGNPITVTPPNFVELEVTDTDPGLKGDTQGTGGKPATLATGAVVRVPLFIAIGEVIKVDTRTGEYVGRVK</sequence>
<organism>
    <name type="scientific">Vibrio parahaemolyticus serotype O3:K6 (strain RIMD 2210633)</name>
    <dbReference type="NCBI Taxonomy" id="223926"/>
    <lineage>
        <taxon>Bacteria</taxon>
        <taxon>Pseudomonadati</taxon>
        <taxon>Pseudomonadota</taxon>
        <taxon>Gammaproteobacteria</taxon>
        <taxon>Vibrionales</taxon>
        <taxon>Vibrionaceae</taxon>
        <taxon>Vibrio</taxon>
    </lineage>
</organism>
<protein>
    <recommendedName>
        <fullName evidence="1">Elongation factor P</fullName>
        <shortName evidence="1">EF-P</shortName>
    </recommendedName>
</protein>
<dbReference type="EMBL" id="BA000031">
    <property type="protein sequence ID" value="BAC61108.1"/>
    <property type="molecule type" value="Genomic_DNA"/>
</dbReference>
<dbReference type="RefSeq" id="NP_799224.1">
    <property type="nucleotide sequence ID" value="NC_004603.1"/>
</dbReference>
<dbReference type="RefSeq" id="WP_005456976.1">
    <property type="nucleotide sequence ID" value="NC_004603.1"/>
</dbReference>
<dbReference type="SMR" id="Q87KX9"/>
<dbReference type="GeneID" id="47655432"/>
<dbReference type="KEGG" id="vpa:VP2845"/>
<dbReference type="PATRIC" id="fig|223926.6.peg.2737"/>
<dbReference type="eggNOG" id="COG0231">
    <property type="taxonomic scope" value="Bacteria"/>
</dbReference>
<dbReference type="HOGENOM" id="CLU_074944_0_0_6"/>
<dbReference type="UniPathway" id="UPA00345"/>
<dbReference type="Proteomes" id="UP000002493">
    <property type="component" value="Chromosome 1"/>
</dbReference>
<dbReference type="GO" id="GO:0005737">
    <property type="term" value="C:cytoplasm"/>
    <property type="evidence" value="ECO:0007669"/>
    <property type="project" value="UniProtKB-SubCell"/>
</dbReference>
<dbReference type="GO" id="GO:0003746">
    <property type="term" value="F:translation elongation factor activity"/>
    <property type="evidence" value="ECO:0007669"/>
    <property type="project" value="UniProtKB-UniRule"/>
</dbReference>
<dbReference type="GO" id="GO:0043043">
    <property type="term" value="P:peptide biosynthetic process"/>
    <property type="evidence" value="ECO:0007669"/>
    <property type="project" value="InterPro"/>
</dbReference>
<dbReference type="CDD" id="cd04470">
    <property type="entry name" value="S1_EF-P_repeat_1"/>
    <property type="match status" value="1"/>
</dbReference>
<dbReference type="CDD" id="cd05794">
    <property type="entry name" value="S1_EF-P_repeat_2"/>
    <property type="match status" value="1"/>
</dbReference>
<dbReference type="FunFam" id="2.30.30.30:FF:000003">
    <property type="entry name" value="Elongation factor P"/>
    <property type="match status" value="1"/>
</dbReference>
<dbReference type="FunFam" id="2.40.50.140:FF:000004">
    <property type="entry name" value="Elongation factor P"/>
    <property type="match status" value="1"/>
</dbReference>
<dbReference type="FunFam" id="2.40.50.140:FF:000009">
    <property type="entry name" value="Elongation factor P"/>
    <property type="match status" value="1"/>
</dbReference>
<dbReference type="Gene3D" id="2.30.30.30">
    <property type="match status" value="1"/>
</dbReference>
<dbReference type="Gene3D" id="2.40.50.140">
    <property type="entry name" value="Nucleic acid-binding proteins"/>
    <property type="match status" value="2"/>
</dbReference>
<dbReference type="HAMAP" id="MF_00141">
    <property type="entry name" value="EF_P"/>
    <property type="match status" value="1"/>
</dbReference>
<dbReference type="InterPro" id="IPR015365">
    <property type="entry name" value="Elong-fact-P_C"/>
</dbReference>
<dbReference type="InterPro" id="IPR012340">
    <property type="entry name" value="NA-bd_OB-fold"/>
</dbReference>
<dbReference type="InterPro" id="IPR014722">
    <property type="entry name" value="Rib_uL2_dom2"/>
</dbReference>
<dbReference type="InterPro" id="IPR020599">
    <property type="entry name" value="Transl_elong_fac_P/YeiP"/>
</dbReference>
<dbReference type="InterPro" id="IPR013185">
    <property type="entry name" value="Transl_elong_KOW-like"/>
</dbReference>
<dbReference type="InterPro" id="IPR001059">
    <property type="entry name" value="Transl_elong_P/YeiP_cen"/>
</dbReference>
<dbReference type="InterPro" id="IPR013852">
    <property type="entry name" value="Transl_elong_P/YeiP_CS"/>
</dbReference>
<dbReference type="InterPro" id="IPR011768">
    <property type="entry name" value="Transl_elongation_fac_P"/>
</dbReference>
<dbReference type="InterPro" id="IPR008991">
    <property type="entry name" value="Translation_prot_SH3-like_sf"/>
</dbReference>
<dbReference type="NCBIfam" id="TIGR00038">
    <property type="entry name" value="efp"/>
    <property type="match status" value="1"/>
</dbReference>
<dbReference type="NCBIfam" id="NF001810">
    <property type="entry name" value="PRK00529.1"/>
    <property type="match status" value="1"/>
</dbReference>
<dbReference type="PANTHER" id="PTHR30053">
    <property type="entry name" value="ELONGATION FACTOR P"/>
    <property type="match status" value="1"/>
</dbReference>
<dbReference type="PANTHER" id="PTHR30053:SF12">
    <property type="entry name" value="ELONGATION FACTOR P (EF-P) FAMILY PROTEIN"/>
    <property type="match status" value="1"/>
</dbReference>
<dbReference type="Pfam" id="PF01132">
    <property type="entry name" value="EFP"/>
    <property type="match status" value="1"/>
</dbReference>
<dbReference type="Pfam" id="PF08207">
    <property type="entry name" value="EFP_N"/>
    <property type="match status" value="1"/>
</dbReference>
<dbReference type="Pfam" id="PF09285">
    <property type="entry name" value="Elong-fact-P_C"/>
    <property type="match status" value="1"/>
</dbReference>
<dbReference type="PIRSF" id="PIRSF005901">
    <property type="entry name" value="EF-P"/>
    <property type="match status" value="1"/>
</dbReference>
<dbReference type="SMART" id="SM01185">
    <property type="entry name" value="EFP"/>
    <property type="match status" value="1"/>
</dbReference>
<dbReference type="SMART" id="SM00841">
    <property type="entry name" value="Elong-fact-P_C"/>
    <property type="match status" value="1"/>
</dbReference>
<dbReference type="SUPFAM" id="SSF50249">
    <property type="entry name" value="Nucleic acid-binding proteins"/>
    <property type="match status" value="2"/>
</dbReference>
<dbReference type="SUPFAM" id="SSF50104">
    <property type="entry name" value="Translation proteins SH3-like domain"/>
    <property type="match status" value="1"/>
</dbReference>
<dbReference type="PROSITE" id="PS01275">
    <property type="entry name" value="EFP"/>
    <property type="match status" value="1"/>
</dbReference>
<name>EFP_VIBPA</name>
<comment type="function">
    <text evidence="1">Involved in peptide bond synthesis. Alleviates ribosome stalling that occurs when 3 or more consecutive Pro residues or the sequence PPG is present in a protein, possibly by augmenting the peptidyl transferase activity of the ribosome. Modification of Lys-34 is required for alleviation.</text>
</comment>
<comment type="pathway">
    <text evidence="1">Protein biosynthesis; polypeptide chain elongation.</text>
</comment>
<comment type="subcellular location">
    <subcellularLocation>
        <location evidence="1">Cytoplasm</location>
    </subcellularLocation>
</comment>
<comment type="PTM">
    <text evidence="1">May be beta-lysylated on the epsilon-amino group of Lys-34 by the combined action of EpmA and EpmB, and then hydroxylated on the C5 position of the same residue by EpmC (if this protein is present). Lysylation is critical for the stimulatory effect of EF-P on peptide-bond formation. The lysylation moiety may extend toward the peptidyltransferase center and stabilize the terminal 3-CCA end of the tRNA. Hydroxylation of the C5 position on Lys-34 may allow additional potential stabilizing hydrogen-bond interactions with the P-tRNA.</text>
</comment>
<comment type="similarity">
    <text evidence="1">Belongs to the elongation factor P family.</text>
</comment>
<gene>
    <name evidence="1" type="primary">efp</name>
    <name type="ordered locus">VP2845</name>
</gene>
<keyword id="KW-0963">Cytoplasm</keyword>
<keyword id="KW-0251">Elongation factor</keyword>
<keyword id="KW-0379">Hydroxylation</keyword>
<keyword id="KW-0648">Protein biosynthesis</keyword>